<evidence type="ECO:0000255" key="1">
    <source>
        <dbReference type="HAMAP-Rule" id="MF_01364"/>
    </source>
</evidence>
<evidence type="ECO:0000305" key="2"/>
<comment type="function">
    <text evidence="1">Binds 16S rRNA, required for the assembly of 30S particles and may also be responsible for determining the conformation of the 16S rRNA at the A site.</text>
</comment>
<comment type="cofactor">
    <cofactor evidence="1">
        <name>Zn(2+)</name>
        <dbReference type="ChEBI" id="CHEBI:29105"/>
    </cofactor>
    <text evidence="1">Binds 1 zinc ion per subunit.</text>
</comment>
<comment type="subunit">
    <text evidence="1">Part of the 30S ribosomal subunit. Contacts proteins S3 and S10.</text>
</comment>
<comment type="similarity">
    <text evidence="1">Belongs to the universal ribosomal protein uS14 family. Zinc-binding uS14 subfamily.</text>
</comment>
<reference key="1">
    <citation type="journal article" date="2008" name="BMC Genomics">
        <title>Acidithiobacillus ferrooxidans metabolism: from genome sequence to industrial applications.</title>
        <authorList>
            <person name="Valdes J."/>
            <person name="Pedroso I."/>
            <person name="Quatrini R."/>
            <person name="Dodson R.J."/>
            <person name="Tettelin H."/>
            <person name="Blake R. II"/>
            <person name="Eisen J.A."/>
            <person name="Holmes D.S."/>
        </authorList>
    </citation>
    <scope>NUCLEOTIDE SEQUENCE [LARGE SCALE GENOMIC DNA]</scope>
    <source>
        <strain>ATCC 23270 / DSM 14882 / CIP 104768 / NCIMB 8455</strain>
    </source>
</reference>
<organism>
    <name type="scientific">Acidithiobacillus ferrooxidans (strain ATCC 23270 / DSM 14882 / CIP 104768 / NCIMB 8455)</name>
    <name type="common">Ferrobacillus ferrooxidans (strain ATCC 23270)</name>
    <dbReference type="NCBI Taxonomy" id="243159"/>
    <lineage>
        <taxon>Bacteria</taxon>
        <taxon>Pseudomonadati</taxon>
        <taxon>Pseudomonadota</taxon>
        <taxon>Acidithiobacillia</taxon>
        <taxon>Acidithiobacillales</taxon>
        <taxon>Acidithiobacillaceae</taxon>
        <taxon>Acidithiobacillus</taxon>
    </lineage>
</organism>
<keyword id="KW-0479">Metal-binding</keyword>
<keyword id="KW-1185">Reference proteome</keyword>
<keyword id="KW-0687">Ribonucleoprotein</keyword>
<keyword id="KW-0689">Ribosomal protein</keyword>
<keyword id="KW-0694">RNA-binding</keyword>
<keyword id="KW-0699">rRNA-binding</keyword>
<keyword id="KW-0862">Zinc</keyword>
<dbReference type="EMBL" id="CP001219">
    <property type="protein sequence ID" value="ACK79986.1"/>
    <property type="molecule type" value="Genomic_DNA"/>
</dbReference>
<dbReference type="RefSeq" id="WP_012536091.1">
    <property type="nucleotide sequence ID" value="NC_011761.1"/>
</dbReference>
<dbReference type="SMR" id="B7J480"/>
<dbReference type="STRING" id="243159.AFE_0340"/>
<dbReference type="PaxDb" id="243159-AFE_0340"/>
<dbReference type="KEGG" id="afr:AFE_0340"/>
<dbReference type="eggNOG" id="COG0199">
    <property type="taxonomic scope" value="Bacteria"/>
</dbReference>
<dbReference type="HOGENOM" id="CLU_139869_3_0_6"/>
<dbReference type="Proteomes" id="UP000001362">
    <property type="component" value="Chromosome"/>
</dbReference>
<dbReference type="GO" id="GO:0005737">
    <property type="term" value="C:cytoplasm"/>
    <property type="evidence" value="ECO:0007669"/>
    <property type="project" value="UniProtKB-ARBA"/>
</dbReference>
<dbReference type="GO" id="GO:0015935">
    <property type="term" value="C:small ribosomal subunit"/>
    <property type="evidence" value="ECO:0007669"/>
    <property type="project" value="TreeGrafter"/>
</dbReference>
<dbReference type="GO" id="GO:0019843">
    <property type="term" value="F:rRNA binding"/>
    <property type="evidence" value="ECO:0007669"/>
    <property type="project" value="UniProtKB-UniRule"/>
</dbReference>
<dbReference type="GO" id="GO:0003735">
    <property type="term" value="F:structural constituent of ribosome"/>
    <property type="evidence" value="ECO:0007669"/>
    <property type="project" value="InterPro"/>
</dbReference>
<dbReference type="GO" id="GO:0008270">
    <property type="term" value="F:zinc ion binding"/>
    <property type="evidence" value="ECO:0007669"/>
    <property type="project" value="UniProtKB-UniRule"/>
</dbReference>
<dbReference type="GO" id="GO:0006412">
    <property type="term" value="P:translation"/>
    <property type="evidence" value="ECO:0007669"/>
    <property type="project" value="UniProtKB-UniRule"/>
</dbReference>
<dbReference type="FunFam" id="4.10.830.10:FF:000001">
    <property type="entry name" value="30S ribosomal protein S14 type Z"/>
    <property type="match status" value="1"/>
</dbReference>
<dbReference type="Gene3D" id="4.10.830.10">
    <property type="entry name" value="30s Ribosomal Protein S14, Chain N"/>
    <property type="match status" value="1"/>
</dbReference>
<dbReference type="HAMAP" id="MF_01364_B">
    <property type="entry name" value="Ribosomal_uS14_2_B"/>
    <property type="match status" value="1"/>
</dbReference>
<dbReference type="InterPro" id="IPR001209">
    <property type="entry name" value="Ribosomal_uS14"/>
</dbReference>
<dbReference type="InterPro" id="IPR023053">
    <property type="entry name" value="Ribosomal_uS14_bact"/>
</dbReference>
<dbReference type="InterPro" id="IPR018271">
    <property type="entry name" value="Ribosomal_uS14_CS"/>
</dbReference>
<dbReference type="InterPro" id="IPR043140">
    <property type="entry name" value="Ribosomal_uS14_sf"/>
</dbReference>
<dbReference type="NCBIfam" id="NF005974">
    <property type="entry name" value="PRK08061.1"/>
    <property type="match status" value="1"/>
</dbReference>
<dbReference type="PANTHER" id="PTHR19836">
    <property type="entry name" value="30S RIBOSOMAL PROTEIN S14"/>
    <property type="match status" value="1"/>
</dbReference>
<dbReference type="PANTHER" id="PTHR19836:SF19">
    <property type="entry name" value="SMALL RIBOSOMAL SUBUNIT PROTEIN US14M"/>
    <property type="match status" value="1"/>
</dbReference>
<dbReference type="Pfam" id="PF00253">
    <property type="entry name" value="Ribosomal_S14"/>
    <property type="match status" value="1"/>
</dbReference>
<dbReference type="SUPFAM" id="SSF57716">
    <property type="entry name" value="Glucocorticoid receptor-like (DNA-binding domain)"/>
    <property type="match status" value="1"/>
</dbReference>
<dbReference type="PROSITE" id="PS00527">
    <property type="entry name" value="RIBOSOMAL_S14"/>
    <property type="match status" value="1"/>
</dbReference>
<proteinExistence type="inferred from homology"/>
<gene>
    <name evidence="1" type="primary">rpsZ</name>
    <name evidence="1" type="synonym">rpsN</name>
    <name type="ordered locus">AFE_0340</name>
</gene>
<sequence length="61" mass="7005">MAKKSLIAKSERTPKFKVRAYHRCKLCGRSRGYYRKFGLCRLCFRKHASAGSIPGIVKASW</sequence>
<name>RS14Z_ACIF2</name>
<feature type="chain" id="PRO_1000143876" description="Small ribosomal subunit protein uS14">
    <location>
        <begin position="1"/>
        <end position="61"/>
    </location>
</feature>
<feature type="binding site" evidence="1">
    <location>
        <position position="24"/>
    </location>
    <ligand>
        <name>Zn(2+)</name>
        <dbReference type="ChEBI" id="CHEBI:29105"/>
    </ligand>
</feature>
<feature type="binding site" evidence="1">
    <location>
        <position position="27"/>
    </location>
    <ligand>
        <name>Zn(2+)</name>
        <dbReference type="ChEBI" id="CHEBI:29105"/>
    </ligand>
</feature>
<feature type="binding site" evidence="1">
    <location>
        <position position="40"/>
    </location>
    <ligand>
        <name>Zn(2+)</name>
        <dbReference type="ChEBI" id="CHEBI:29105"/>
    </ligand>
</feature>
<feature type="binding site" evidence="1">
    <location>
        <position position="43"/>
    </location>
    <ligand>
        <name>Zn(2+)</name>
        <dbReference type="ChEBI" id="CHEBI:29105"/>
    </ligand>
</feature>
<protein>
    <recommendedName>
        <fullName evidence="1">Small ribosomal subunit protein uS14</fullName>
    </recommendedName>
    <alternativeName>
        <fullName evidence="2">30S ribosomal protein S14 type Z</fullName>
    </alternativeName>
</protein>
<accession>B7J480</accession>